<gene>
    <name evidence="1" type="primary">aat</name>
    <name type="ordered locus">mma_2511</name>
</gene>
<protein>
    <recommendedName>
        <fullName evidence="1">Leucyl/phenylalanyl-tRNA--protein transferase</fullName>
        <ecNumber evidence="1">2.3.2.6</ecNumber>
    </recommendedName>
    <alternativeName>
        <fullName evidence="1">L/F-transferase</fullName>
    </alternativeName>
    <alternativeName>
        <fullName evidence="1">Leucyltransferase</fullName>
    </alternativeName>
    <alternativeName>
        <fullName evidence="1">Phenyalanyltransferase</fullName>
    </alternativeName>
</protein>
<evidence type="ECO:0000255" key="1">
    <source>
        <dbReference type="HAMAP-Rule" id="MF_00688"/>
    </source>
</evidence>
<reference key="1">
    <citation type="journal article" date="2007" name="PLoS Genet.">
        <title>Genome analysis of Minibacterium massiliensis highlights the convergent evolution of water-living bacteria.</title>
        <authorList>
            <person name="Audic S."/>
            <person name="Robert C."/>
            <person name="Campagna B."/>
            <person name="Parinello H."/>
            <person name="Claverie J.-M."/>
            <person name="Raoult D."/>
            <person name="Drancourt M."/>
        </authorList>
    </citation>
    <scope>NUCLEOTIDE SEQUENCE [LARGE SCALE GENOMIC DNA]</scope>
    <source>
        <strain>Marseille</strain>
    </source>
</reference>
<sequence>MIPWLEADDPFPHVSSALTEADGAAGLLAAGADLSTGRLLQAYKHGIFPWFSEGQPILWWSTDPRMVLFVENFRISASLKKKLKKIHHSITSRDGQWEIRFDHAFEEVMRACAAPRNGEGGTWISDEIIAGYTGLHKLGYAHSSELWLQGKLVGAAYGVSIGQMFYGESMFARVPDASKIALAYLVHFLRNHDVSMIDCQQETSHLATLGAAPIARTEFISRLRQAVSGPQISNWQPIALFPHD</sequence>
<organism>
    <name type="scientific">Janthinobacterium sp. (strain Marseille)</name>
    <name type="common">Minibacterium massiliensis</name>
    <dbReference type="NCBI Taxonomy" id="375286"/>
    <lineage>
        <taxon>Bacteria</taxon>
        <taxon>Pseudomonadati</taxon>
        <taxon>Pseudomonadota</taxon>
        <taxon>Betaproteobacteria</taxon>
        <taxon>Burkholderiales</taxon>
        <taxon>Oxalobacteraceae</taxon>
        <taxon>Janthinobacterium</taxon>
    </lineage>
</organism>
<dbReference type="EC" id="2.3.2.6" evidence="1"/>
<dbReference type="EMBL" id="CP000269">
    <property type="protein sequence ID" value="ABR89013.1"/>
    <property type="molecule type" value="Genomic_DNA"/>
</dbReference>
<dbReference type="RefSeq" id="WP_012080364.1">
    <property type="nucleotide sequence ID" value="NC_009659.1"/>
</dbReference>
<dbReference type="SMR" id="A6T104"/>
<dbReference type="STRING" id="375286.mma_2511"/>
<dbReference type="KEGG" id="mms:mma_2511"/>
<dbReference type="eggNOG" id="COG2360">
    <property type="taxonomic scope" value="Bacteria"/>
</dbReference>
<dbReference type="HOGENOM" id="CLU_075045_0_0_4"/>
<dbReference type="OrthoDB" id="9790282at2"/>
<dbReference type="Proteomes" id="UP000006388">
    <property type="component" value="Chromosome"/>
</dbReference>
<dbReference type="GO" id="GO:0005737">
    <property type="term" value="C:cytoplasm"/>
    <property type="evidence" value="ECO:0007669"/>
    <property type="project" value="UniProtKB-SubCell"/>
</dbReference>
<dbReference type="GO" id="GO:0008914">
    <property type="term" value="F:leucyl-tRNA--protein transferase activity"/>
    <property type="evidence" value="ECO:0007669"/>
    <property type="project" value="UniProtKB-UniRule"/>
</dbReference>
<dbReference type="GO" id="GO:0030163">
    <property type="term" value="P:protein catabolic process"/>
    <property type="evidence" value="ECO:0007669"/>
    <property type="project" value="UniProtKB-UniRule"/>
</dbReference>
<dbReference type="Gene3D" id="3.40.630.70">
    <property type="entry name" value="Leucyl/phenylalanyl-tRNA-protein transferase, C-terminal domain"/>
    <property type="match status" value="1"/>
</dbReference>
<dbReference type="Gene3D" id="3.30.70.3550">
    <property type="entry name" value="Leucyl/phenylalanyl-tRNA-protein transferase, N-terminal domain"/>
    <property type="match status" value="1"/>
</dbReference>
<dbReference type="HAMAP" id="MF_00688">
    <property type="entry name" value="Leu_Phe_trans"/>
    <property type="match status" value="1"/>
</dbReference>
<dbReference type="InterPro" id="IPR016181">
    <property type="entry name" value="Acyl_CoA_acyltransferase"/>
</dbReference>
<dbReference type="InterPro" id="IPR004616">
    <property type="entry name" value="Leu/Phe-tRNA_Trfase"/>
</dbReference>
<dbReference type="InterPro" id="IPR042203">
    <property type="entry name" value="Leu/Phe-tRNA_Trfase_C"/>
</dbReference>
<dbReference type="InterPro" id="IPR042221">
    <property type="entry name" value="Leu/Phe-tRNA_Trfase_N"/>
</dbReference>
<dbReference type="NCBIfam" id="TIGR00667">
    <property type="entry name" value="aat"/>
    <property type="match status" value="1"/>
</dbReference>
<dbReference type="PANTHER" id="PTHR30098">
    <property type="entry name" value="LEUCYL/PHENYLALANYL-TRNA--PROTEIN TRANSFERASE"/>
    <property type="match status" value="1"/>
</dbReference>
<dbReference type="PANTHER" id="PTHR30098:SF2">
    <property type="entry name" value="LEUCYL_PHENYLALANYL-TRNA--PROTEIN TRANSFERASE"/>
    <property type="match status" value="1"/>
</dbReference>
<dbReference type="Pfam" id="PF03588">
    <property type="entry name" value="Leu_Phe_trans"/>
    <property type="match status" value="1"/>
</dbReference>
<dbReference type="SUPFAM" id="SSF55729">
    <property type="entry name" value="Acyl-CoA N-acyltransferases (Nat)"/>
    <property type="match status" value="1"/>
</dbReference>
<comment type="function">
    <text evidence="1">Functions in the N-end rule pathway of protein degradation where it conjugates Leu, Phe and, less efficiently, Met from aminoacyl-tRNAs to the N-termini of proteins containing an N-terminal arginine or lysine.</text>
</comment>
<comment type="catalytic activity">
    <reaction evidence="1">
        <text>N-terminal L-lysyl-[protein] + L-leucyl-tRNA(Leu) = N-terminal L-leucyl-L-lysyl-[protein] + tRNA(Leu) + H(+)</text>
        <dbReference type="Rhea" id="RHEA:12340"/>
        <dbReference type="Rhea" id="RHEA-COMP:9613"/>
        <dbReference type="Rhea" id="RHEA-COMP:9622"/>
        <dbReference type="Rhea" id="RHEA-COMP:12670"/>
        <dbReference type="Rhea" id="RHEA-COMP:12671"/>
        <dbReference type="ChEBI" id="CHEBI:15378"/>
        <dbReference type="ChEBI" id="CHEBI:65249"/>
        <dbReference type="ChEBI" id="CHEBI:78442"/>
        <dbReference type="ChEBI" id="CHEBI:78494"/>
        <dbReference type="ChEBI" id="CHEBI:133043"/>
        <dbReference type="EC" id="2.3.2.6"/>
    </reaction>
</comment>
<comment type="catalytic activity">
    <reaction evidence="1">
        <text>N-terminal L-arginyl-[protein] + L-leucyl-tRNA(Leu) = N-terminal L-leucyl-L-arginyl-[protein] + tRNA(Leu) + H(+)</text>
        <dbReference type="Rhea" id="RHEA:50416"/>
        <dbReference type="Rhea" id="RHEA-COMP:9613"/>
        <dbReference type="Rhea" id="RHEA-COMP:9622"/>
        <dbReference type="Rhea" id="RHEA-COMP:12672"/>
        <dbReference type="Rhea" id="RHEA-COMP:12673"/>
        <dbReference type="ChEBI" id="CHEBI:15378"/>
        <dbReference type="ChEBI" id="CHEBI:64719"/>
        <dbReference type="ChEBI" id="CHEBI:78442"/>
        <dbReference type="ChEBI" id="CHEBI:78494"/>
        <dbReference type="ChEBI" id="CHEBI:133044"/>
        <dbReference type="EC" id="2.3.2.6"/>
    </reaction>
</comment>
<comment type="catalytic activity">
    <reaction evidence="1">
        <text>L-phenylalanyl-tRNA(Phe) + an N-terminal L-alpha-aminoacyl-[protein] = an N-terminal L-phenylalanyl-L-alpha-aminoacyl-[protein] + tRNA(Phe)</text>
        <dbReference type="Rhea" id="RHEA:43632"/>
        <dbReference type="Rhea" id="RHEA-COMP:9668"/>
        <dbReference type="Rhea" id="RHEA-COMP:9699"/>
        <dbReference type="Rhea" id="RHEA-COMP:10636"/>
        <dbReference type="Rhea" id="RHEA-COMP:10637"/>
        <dbReference type="ChEBI" id="CHEBI:78442"/>
        <dbReference type="ChEBI" id="CHEBI:78531"/>
        <dbReference type="ChEBI" id="CHEBI:78597"/>
        <dbReference type="ChEBI" id="CHEBI:83561"/>
        <dbReference type="EC" id="2.3.2.6"/>
    </reaction>
</comment>
<comment type="subcellular location">
    <subcellularLocation>
        <location evidence="1">Cytoplasm</location>
    </subcellularLocation>
</comment>
<comment type="similarity">
    <text evidence="1">Belongs to the L/F-transferase family.</text>
</comment>
<accession>A6T104</accession>
<proteinExistence type="inferred from homology"/>
<feature type="chain" id="PRO_1000045105" description="Leucyl/phenylalanyl-tRNA--protein transferase">
    <location>
        <begin position="1"/>
        <end position="244"/>
    </location>
</feature>
<name>LFTR_JANMA</name>
<keyword id="KW-0012">Acyltransferase</keyword>
<keyword id="KW-0963">Cytoplasm</keyword>
<keyword id="KW-0808">Transferase</keyword>